<organism>
    <name type="scientific">Escherichia coli O139:H28 (strain E24377A / ETEC)</name>
    <dbReference type="NCBI Taxonomy" id="331111"/>
    <lineage>
        <taxon>Bacteria</taxon>
        <taxon>Pseudomonadati</taxon>
        <taxon>Pseudomonadota</taxon>
        <taxon>Gammaproteobacteria</taxon>
        <taxon>Enterobacterales</taxon>
        <taxon>Enterobacteriaceae</taxon>
        <taxon>Escherichia</taxon>
    </lineage>
</organism>
<accession>A7ZSH6</accession>
<feature type="chain" id="PRO_1000058400" description="Methionyl-tRNA formyltransferase">
    <location>
        <begin position="1"/>
        <end position="315"/>
    </location>
</feature>
<feature type="binding site" evidence="1">
    <location>
        <begin position="113"/>
        <end position="116"/>
    </location>
    <ligand>
        <name>(6S)-5,6,7,8-tetrahydrofolate</name>
        <dbReference type="ChEBI" id="CHEBI:57453"/>
    </ligand>
</feature>
<protein>
    <recommendedName>
        <fullName evidence="1">Methionyl-tRNA formyltransferase</fullName>
        <ecNumber evidence="1">2.1.2.9</ecNumber>
    </recommendedName>
</protein>
<gene>
    <name evidence="1" type="primary">fmt</name>
    <name type="ordered locus">EcE24377A_3770</name>
</gene>
<evidence type="ECO:0000255" key="1">
    <source>
        <dbReference type="HAMAP-Rule" id="MF_00182"/>
    </source>
</evidence>
<proteinExistence type="inferred from homology"/>
<dbReference type="EC" id="2.1.2.9" evidence="1"/>
<dbReference type="EMBL" id="CP000800">
    <property type="protein sequence ID" value="ABV18425.1"/>
    <property type="molecule type" value="Genomic_DNA"/>
</dbReference>
<dbReference type="RefSeq" id="WP_000004432.1">
    <property type="nucleotide sequence ID" value="NC_009801.1"/>
</dbReference>
<dbReference type="SMR" id="A7ZSH6"/>
<dbReference type="GeneID" id="75204130"/>
<dbReference type="KEGG" id="ecw:EcE24377A_3770"/>
<dbReference type="HOGENOM" id="CLU_033347_1_2_6"/>
<dbReference type="Proteomes" id="UP000001122">
    <property type="component" value="Chromosome"/>
</dbReference>
<dbReference type="GO" id="GO:0005829">
    <property type="term" value="C:cytosol"/>
    <property type="evidence" value="ECO:0007669"/>
    <property type="project" value="TreeGrafter"/>
</dbReference>
<dbReference type="GO" id="GO:0004479">
    <property type="term" value="F:methionyl-tRNA formyltransferase activity"/>
    <property type="evidence" value="ECO:0007669"/>
    <property type="project" value="UniProtKB-UniRule"/>
</dbReference>
<dbReference type="CDD" id="cd08646">
    <property type="entry name" value="FMT_core_Met-tRNA-FMT_N"/>
    <property type="match status" value="1"/>
</dbReference>
<dbReference type="CDD" id="cd08704">
    <property type="entry name" value="Met_tRNA_FMT_C"/>
    <property type="match status" value="1"/>
</dbReference>
<dbReference type="FunFam" id="3.10.25.10:FF:000001">
    <property type="entry name" value="Methionyl-tRNA formyltransferase"/>
    <property type="match status" value="1"/>
</dbReference>
<dbReference type="FunFam" id="3.40.50.12230:FF:000001">
    <property type="entry name" value="Methionyl-tRNA formyltransferase"/>
    <property type="match status" value="1"/>
</dbReference>
<dbReference type="FunFam" id="3.40.50.170:FF:000003">
    <property type="entry name" value="Methionyl-tRNA formyltransferase"/>
    <property type="match status" value="1"/>
</dbReference>
<dbReference type="Gene3D" id="3.10.25.10">
    <property type="entry name" value="Formyl transferase, C-terminal domain"/>
    <property type="match status" value="1"/>
</dbReference>
<dbReference type="Gene3D" id="3.40.50.170">
    <property type="entry name" value="Formyl transferase, N-terminal domain"/>
    <property type="match status" value="1"/>
</dbReference>
<dbReference type="HAMAP" id="MF_00182">
    <property type="entry name" value="Formyl_trans"/>
    <property type="match status" value="1"/>
</dbReference>
<dbReference type="InterPro" id="IPR005794">
    <property type="entry name" value="Fmt"/>
</dbReference>
<dbReference type="InterPro" id="IPR005793">
    <property type="entry name" value="Formyl_trans_C"/>
</dbReference>
<dbReference type="InterPro" id="IPR037022">
    <property type="entry name" value="Formyl_trans_C_sf"/>
</dbReference>
<dbReference type="InterPro" id="IPR002376">
    <property type="entry name" value="Formyl_transf_N"/>
</dbReference>
<dbReference type="InterPro" id="IPR036477">
    <property type="entry name" value="Formyl_transf_N_sf"/>
</dbReference>
<dbReference type="InterPro" id="IPR011034">
    <property type="entry name" value="Formyl_transferase-like_C_sf"/>
</dbReference>
<dbReference type="InterPro" id="IPR001555">
    <property type="entry name" value="GART_AS"/>
</dbReference>
<dbReference type="InterPro" id="IPR044135">
    <property type="entry name" value="Met-tRNA-FMT_C"/>
</dbReference>
<dbReference type="InterPro" id="IPR041711">
    <property type="entry name" value="Met-tRNA-FMT_N"/>
</dbReference>
<dbReference type="NCBIfam" id="TIGR00460">
    <property type="entry name" value="fmt"/>
    <property type="match status" value="1"/>
</dbReference>
<dbReference type="PANTHER" id="PTHR11138">
    <property type="entry name" value="METHIONYL-TRNA FORMYLTRANSFERASE"/>
    <property type="match status" value="1"/>
</dbReference>
<dbReference type="PANTHER" id="PTHR11138:SF5">
    <property type="entry name" value="METHIONYL-TRNA FORMYLTRANSFERASE, MITOCHONDRIAL"/>
    <property type="match status" value="1"/>
</dbReference>
<dbReference type="Pfam" id="PF02911">
    <property type="entry name" value="Formyl_trans_C"/>
    <property type="match status" value="1"/>
</dbReference>
<dbReference type="Pfam" id="PF00551">
    <property type="entry name" value="Formyl_trans_N"/>
    <property type="match status" value="1"/>
</dbReference>
<dbReference type="SUPFAM" id="SSF50486">
    <property type="entry name" value="FMT C-terminal domain-like"/>
    <property type="match status" value="1"/>
</dbReference>
<dbReference type="SUPFAM" id="SSF53328">
    <property type="entry name" value="Formyltransferase"/>
    <property type="match status" value="1"/>
</dbReference>
<dbReference type="PROSITE" id="PS00373">
    <property type="entry name" value="GART"/>
    <property type="match status" value="1"/>
</dbReference>
<sequence length="315" mass="34168">MSESLRIIFAGTPDFAARHLDALLSSGHNVVGVFTQPDRPAGRGKKLMPSPIKVLAEEKGLPVFQPVSLRPQENQQLVADLQADVMVVVAYGLILPKAVLEMPRLGCINVHGSLLPRWRGAAPIQRSLWAGDAETGVTIMQMDVGLDTGDMLYKLSCPITAEDTSGTLYDKLAELGPQGLITTLKQLADGTAKPEVQDETLVTYAEKLSKEEARIDWSLSAAQLERCIRAFNPWPMSWLEIEGQPVKVWKASVIDTATNAAPGTILEANKQGIQVATGDGILNLLSLQPAGKKAMSAQDLLNSRREWFVPGNRLV</sequence>
<keyword id="KW-0648">Protein biosynthesis</keyword>
<keyword id="KW-1185">Reference proteome</keyword>
<keyword id="KW-0808">Transferase</keyword>
<comment type="function">
    <text evidence="1">Attaches a formyl group to the free amino group of methionyl-tRNA(fMet). The formyl group appears to play a dual role in the initiator identity of N-formylmethionyl-tRNA by promoting its recognition by IF2 and preventing the misappropriation of this tRNA by the elongation apparatus.</text>
</comment>
<comment type="catalytic activity">
    <reaction evidence="1">
        <text>L-methionyl-tRNA(fMet) + (6R)-10-formyltetrahydrofolate = N-formyl-L-methionyl-tRNA(fMet) + (6S)-5,6,7,8-tetrahydrofolate + H(+)</text>
        <dbReference type="Rhea" id="RHEA:24380"/>
        <dbReference type="Rhea" id="RHEA-COMP:9952"/>
        <dbReference type="Rhea" id="RHEA-COMP:9953"/>
        <dbReference type="ChEBI" id="CHEBI:15378"/>
        <dbReference type="ChEBI" id="CHEBI:57453"/>
        <dbReference type="ChEBI" id="CHEBI:78530"/>
        <dbReference type="ChEBI" id="CHEBI:78844"/>
        <dbReference type="ChEBI" id="CHEBI:195366"/>
        <dbReference type="EC" id="2.1.2.9"/>
    </reaction>
</comment>
<comment type="similarity">
    <text evidence="1">Belongs to the Fmt family.</text>
</comment>
<reference key="1">
    <citation type="journal article" date="2008" name="J. Bacteriol.">
        <title>The pangenome structure of Escherichia coli: comparative genomic analysis of E. coli commensal and pathogenic isolates.</title>
        <authorList>
            <person name="Rasko D.A."/>
            <person name="Rosovitz M.J."/>
            <person name="Myers G.S.A."/>
            <person name="Mongodin E.F."/>
            <person name="Fricke W.F."/>
            <person name="Gajer P."/>
            <person name="Crabtree J."/>
            <person name="Sebaihia M."/>
            <person name="Thomson N.R."/>
            <person name="Chaudhuri R."/>
            <person name="Henderson I.R."/>
            <person name="Sperandio V."/>
            <person name="Ravel J."/>
        </authorList>
    </citation>
    <scope>NUCLEOTIDE SEQUENCE [LARGE SCALE GENOMIC DNA]</scope>
    <source>
        <strain>E24377A / ETEC</strain>
    </source>
</reference>
<name>FMT_ECO24</name>